<sequence>MTEQVQDENKLIAERRAKLDSIRPNCSANAHPNTFRRTHKAAELQEKYGQNTKEELEALGFRTSIAGRIMAKRGPFLVIQDVSGRIQAYAEKGVQADLKDRYQGLDIGDIIGVTGQLHLSGKGDLYVNMEEYQLLTKALRPLPEKFHGLTDQETRYRQRYVDLIVNEESRQAFVMRSKVVAAIRNFMIKKEFMEVETPMMHVIPGGASARPFITHHNALDMPMYLRIAPELYLKRLVVGGFERVFEINRNFRNEGLSPRHNPEFTMMEFYMAYADYKDLMDLTEELLSSIAIELLGSAQMPYGEHTVDFGGPYARLSMLEAIQKYNPDNATIQAMTYEQVKDLEFMRELAISLGIKIEKFWTCGQLLEEIFGETAEWQLMQPTFITGYPADISPLARRNDDNHFITDRFEFFIGGREVANGFSELNDAEDQDSRFKAQVDAKDAGDDEAMFYDADYITALEHGLPPTAGQGIGIDRLVMLFTNTHTIRDVILFPAMRPQA</sequence>
<proteinExistence type="inferred from homology"/>
<protein>
    <recommendedName>
        <fullName evidence="1">Lysine--tRNA ligase</fullName>
        <ecNumber evidence="1">6.1.1.6</ecNumber>
    </recommendedName>
    <alternativeName>
        <fullName evidence="1">Lysyl-tRNA synthetase</fullName>
        <shortName evidence="1">LysRS</shortName>
    </alternativeName>
</protein>
<gene>
    <name evidence="1" type="primary">lysS</name>
    <name type="ordered locus">Sputw3181_0896</name>
</gene>
<name>SYK_SHESW</name>
<organism>
    <name type="scientific">Shewanella sp. (strain W3-18-1)</name>
    <dbReference type="NCBI Taxonomy" id="351745"/>
    <lineage>
        <taxon>Bacteria</taxon>
        <taxon>Pseudomonadati</taxon>
        <taxon>Pseudomonadota</taxon>
        <taxon>Gammaproteobacteria</taxon>
        <taxon>Alteromonadales</taxon>
        <taxon>Shewanellaceae</taxon>
        <taxon>Shewanella</taxon>
    </lineage>
</organism>
<comment type="catalytic activity">
    <reaction evidence="1">
        <text>tRNA(Lys) + L-lysine + ATP = L-lysyl-tRNA(Lys) + AMP + diphosphate</text>
        <dbReference type="Rhea" id="RHEA:20792"/>
        <dbReference type="Rhea" id="RHEA-COMP:9696"/>
        <dbReference type="Rhea" id="RHEA-COMP:9697"/>
        <dbReference type="ChEBI" id="CHEBI:30616"/>
        <dbReference type="ChEBI" id="CHEBI:32551"/>
        <dbReference type="ChEBI" id="CHEBI:33019"/>
        <dbReference type="ChEBI" id="CHEBI:78442"/>
        <dbReference type="ChEBI" id="CHEBI:78529"/>
        <dbReference type="ChEBI" id="CHEBI:456215"/>
        <dbReference type="EC" id="6.1.1.6"/>
    </reaction>
</comment>
<comment type="cofactor">
    <cofactor evidence="1">
        <name>Mg(2+)</name>
        <dbReference type="ChEBI" id="CHEBI:18420"/>
    </cofactor>
    <text evidence="1">Binds 3 Mg(2+) ions per subunit.</text>
</comment>
<comment type="subunit">
    <text evidence="1">Homodimer.</text>
</comment>
<comment type="subcellular location">
    <subcellularLocation>
        <location evidence="1">Cytoplasm</location>
    </subcellularLocation>
</comment>
<comment type="similarity">
    <text evidence="1">Belongs to the class-II aminoacyl-tRNA synthetase family.</text>
</comment>
<evidence type="ECO:0000255" key="1">
    <source>
        <dbReference type="HAMAP-Rule" id="MF_00252"/>
    </source>
</evidence>
<dbReference type="EC" id="6.1.1.6" evidence="1"/>
<dbReference type="EMBL" id="CP000503">
    <property type="protein sequence ID" value="ABM23746.1"/>
    <property type="molecule type" value="Genomic_DNA"/>
</dbReference>
<dbReference type="RefSeq" id="WP_011788273.1">
    <property type="nucleotide sequence ID" value="NC_008750.1"/>
</dbReference>
<dbReference type="SMR" id="A1RGF1"/>
<dbReference type="GeneID" id="67444630"/>
<dbReference type="KEGG" id="shw:Sputw3181_0896"/>
<dbReference type="HOGENOM" id="CLU_008255_6_0_6"/>
<dbReference type="Proteomes" id="UP000002597">
    <property type="component" value="Chromosome"/>
</dbReference>
<dbReference type="GO" id="GO:0005829">
    <property type="term" value="C:cytosol"/>
    <property type="evidence" value="ECO:0007669"/>
    <property type="project" value="TreeGrafter"/>
</dbReference>
<dbReference type="GO" id="GO:0005524">
    <property type="term" value="F:ATP binding"/>
    <property type="evidence" value="ECO:0007669"/>
    <property type="project" value="UniProtKB-UniRule"/>
</dbReference>
<dbReference type="GO" id="GO:0004824">
    <property type="term" value="F:lysine-tRNA ligase activity"/>
    <property type="evidence" value="ECO:0007669"/>
    <property type="project" value="UniProtKB-UniRule"/>
</dbReference>
<dbReference type="GO" id="GO:0000287">
    <property type="term" value="F:magnesium ion binding"/>
    <property type="evidence" value="ECO:0007669"/>
    <property type="project" value="UniProtKB-UniRule"/>
</dbReference>
<dbReference type="GO" id="GO:0000049">
    <property type="term" value="F:tRNA binding"/>
    <property type="evidence" value="ECO:0007669"/>
    <property type="project" value="TreeGrafter"/>
</dbReference>
<dbReference type="GO" id="GO:0006430">
    <property type="term" value="P:lysyl-tRNA aminoacylation"/>
    <property type="evidence" value="ECO:0007669"/>
    <property type="project" value="UniProtKB-UniRule"/>
</dbReference>
<dbReference type="CDD" id="cd00775">
    <property type="entry name" value="LysRS_core"/>
    <property type="match status" value="1"/>
</dbReference>
<dbReference type="CDD" id="cd04322">
    <property type="entry name" value="LysRS_N"/>
    <property type="match status" value="1"/>
</dbReference>
<dbReference type="FunFam" id="2.40.50.140:FF:000024">
    <property type="entry name" value="Lysine--tRNA ligase"/>
    <property type="match status" value="1"/>
</dbReference>
<dbReference type="FunFam" id="3.30.930.10:FF:000001">
    <property type="entry name" value="Lysine--tRNA ligase"/>
    <property type="match status" value="1"/>
</dbReference>
<dbReference type="Gene3D" id="3.30.930.10">
    <property type="entry name" value="Bira Bifunctional Protein, Domain 2"/>
    <property type="match status" value="1"/>
</dbReference>
<dbReference type="Gene3D" id="2.40.50.140">
    <property type="entry name" value="Nucleic acid-binding proteins"/>
    <property type="match status" value="1"/>
</dbReference>
<dbReference type="HAMAP" id="MF_00252">
    <property type="entry name" value="Lys_tRNA_synth_class2"/>
    <property type="match status" value="1"/>
</dbReference>
<dbReference type="InterPro" id="IPR004364">
    <property type="entry name" value="Aa-tRNA-synt_II"/>
</dbReference>
<dbReference type="InterPro" id="IPR006195">
    <property type="entry name" value="aa-tRNA-synth_II"/>
</dbReference>
<dbReference type="InterPro" id="IPR045864">
    <property type="entry name" value="aa-tRNA-synth_II/BPL/LPL"/>
</dbReference>
<dbReference type="InterPro" id="IPR002313">
    <property type="entry name" value="Lys-tRNA-ligase_II"/>
</dbReference>
<dbReference type="InterPro" id="IPR044136">
    <property type="entry name" value="Lys-tRNA-ligase_II_N"/>
</dbReference>
<dbReference type="InterPro" id="IPR018149">
    <property type="entry name" value="Lys-tRNA-synth_II_C"/>
</dbReference>
<dbReference type="InterPro" id="IPR012340">
    <property type="entry name" value="NA-bd_OB-fold"/>
</dbReference>
<dbReference type="InterPro" id="IPR004365">
    <property type="entry name" value="NA-bd_OB_tRNA"/>
</dbReference>
<dbReference type="NCBIfam" id="TIGR00499">
    <property type="entry name" value="lysS_bact"/>
    <property type="match status" value="1"/>
</dbReference>
<dbReference type="NCBIfam" id="NF001756">
    <property type="entry name" value="PRK00484.1"/>
    <property type="match status" value="1"/>
</dbReference>
<dbReference type="PANTHER" id="PTHR42918:SF15">
    <property type="entry name" value="LYSINE--TRNA LIGASE, CHLOROPLASTIC_MITOCHONDRIAL"/>
    <property type="match status" value="1"/>
</dbReference>
<dbReference type="PANTHER" id="PTHR42918">
    <property type="entry name" value="LYSYL-TRNA SYNTHETASE"/>
    <property type="match status" value="1"/>
</dbReference>
<dbReference type="Pfam" id="PF00152">
    <property type="entry name" value="tRNA-synt_2"/>
    <property type="match status" value="1"/>
</dbReference>
<dbReference type="Pfam" id="PF01336">
    <property type="entry name" value="tRNA_anti-codon"/>
    <property type="match status" value="1"/>
</dbReference>
<dbReference type="PRINTS" id="PR00982">
    <property type="entry name" value="TRNASYNTHLYS"/>
</dbReference>
<dbReference type="SUPFAM" id="SSF55681">
    <property type="entry name" value="Class II aaRS and biotin synthetases"/>
    <property type="match status" value="1"/>
</dbReference>
<dbReference type="SUPFAM" id="SSF50249">
    <property type="entry name" value="Nucleic acid-binding proteins"/>
    <property type="match status" value="1"/>
</dbReference>
<dbReference type="PROSITE" id="PS50862">
    <property type="entry name" value="AA_TRNA_LIGASE_II"/>
    <property type="match status" value="1"/>
</dbReference>
<accession>A1RGF1</accession>
<keyword id="KW-0030">Aminoacyl-tRNA synthetase</keyword>
<keyword id="KW-0067">ATP-binding</keyword>
<keyword id="KW-0963">Cytoplasm</keyword>
<keyword id="KW-0436">Ligase</keyword>
<keyword id="KW-0460">Magnesium</keyword>
<keyword id="KW-0479">Metal-binding</keyword>
<keyword id="KW-0547">Nucleotide-binding</keyword>
<keyword id="KW-0648">Protein biosynthesis</keyword>
<feature type="chain" id="PRO_1000012934" description="Lysine--tRNA ligase">
    <location>
        <begin position="1"/>
        <end position="500"/>
    </location>
</feature>
<feature type="binding site" evidence="1">
    <location>
        <position position="410"/>
    </location>
    <ligand>
        <name>Mg(2+)</name>
        <dbReference type="ChEBI" id="CHEBI:18420"/>
        <label>1</label>
    </ligand>
</feature>
<feature type="binding site" evidence="1">
    <location>
        <position position="417"/>
    </location>
    <ligand>
        <name>Mg(2+)</name>
        <dbReference type="ChEBI" id="CHEBI:18420"/>
        <label>1</label>
    </ligand>
</feature>
<feature type="binding site" evidence="1">
    <location>
        <position position="417"/>
    </location>
    <ligand>
        <name>Mg(2+)</name>
        <dbReference type="ChEBI" id="CHEBI:18420"/>
        <label>2</label>
    </ligand>
</feature>
<reference key="1">
    <citation type="submission" date="2006-12" db="EMBL/GenBank/DDBJ databases">
        <title>Complete sequence of Shewanella sp. W3-18-1.</title>
        <authorList>
            <consortium name="US DOE Joint Genome Institute"/>
            <person name="Copeland A."/>
            <person name="Lucas S."/>
            <person name="Lapidus A."/>
            <person name="Barry K."/>
            <person name="Detter J.C."/>
            <person name="Glavina del Rio T."/>
            <person name="Hammon N."/>
            <person name="Israni S."/>
            <person name="Dalin E."/>
            <person name="Tice H."/>
            <person name="Pitluck S."/>
            <person name="Chain P."/>
            <person name="Malfatti S."/>
            <person name="Shin M."/>
            <person name="Vergez L."/>
            <person name="Schmutz J."/>
            <person name="Larimer F."/>
            <person name="Land M."/>
            <person name="Hauser L."/>
            <person name="Kyrpides N."/>
            <person name="Lykidis A."/>
            <person name="Tiedje J."/>
            <person name="Richardson P."/>
        </authorList>
    </citation>
    <scope>NUCLEOTIDE SEQUENCE [LARGE SCALE GENOMIC DNA]</scope>
    <source>
        <strain>W3-18-1</strain>
    </source>
</reference>